<gene>
    <name type="primary">C1orf50</name>
</gene>
<keyword id="KW-0175">Coiled coil</keyword>
<keyword id="KW-1267">Proteomics identification</keyword>
<keyword id="KW-1185">Reference proteome</keyword>
<feature type="chain" id="PRO_0000251189" description="Uncharacterized protein C1orf50">
    <location>
        <begin position="1"/>
        <end position="199"/>
    </location>
</feature>
<feature type="region of interest" description="Disordered" evidence="2">
    <location>
        <begin position="1"/>
        <end position="30"/>
    </location>
</feature>
<feature type="coiled-coil region" evidence="1">
    <location>
        <begin position="71"/>
        <end position="101"/>
    </location>
</feature>
<feature type="sequence variant" id="VAR_054409" description="In dbSNP:rs11548275." evidence="3">
    <original>T</original>
    <variation>M</variation>
    <location>
        <position position="178"/>
    </location>
</feature>
<accession>Q9BV19</accession>
<reference key="1">
    <citation type="journal article" date="2006" name="Nature">
        <title>The DNA sequence and biological annotation of human chromosome 1.</title>
        <authorList>
            <person name="Gregory S.G."/>
            <person name="Barlow K.F."/>
            <person name="McLay K.E."/>
            <person name="Kaul R."/>
            <person name="Swarbreck D."/>
            <person name="Dunham A."/>
            <person name="Scott C.E."/>
            <person name="Howe K.L."/>
            <person name="Woodfine K."/>
            <person name="Spencer C.C.A."/>
            <person name="Jones M.C."/>
            <person name="Gillson C."/>
            <person name="Searle S."/>
            <person name="Zhou Y."/>
            <person name="Kokocinski F."/>
            <person name="McDonald L."/>
            <person name="Evans R."/>
            <person name="Phillips K."/>
            <person name="Atkinson A."/>
            <person name="Cooper R."/>
            <person name="Jones C."/>
            <person name="Hall R.E."/>
            <person name="Andrews T.D."/>
            <person name="Lloyd C."/>
            <person name="Ainscough R."/>
            <person name="Almeida J.P."/>
            <person name="Ambrose K.D."/>
            <person name="Anderson F."/>
            <person name="Andrew R.W."/>
            <person name="Ashwell R.I.S."/>
            <person name="Aubin K."/>
            <person name="Babbage A.K."/>
            <person name="Bagguley C.L."/>
            <person name="Bailey J."/>
            <person name="Beasley H."/>
            <person name="Bethel G."/>
            <person name="Bird C.P."/>
            <person name="Bray-Allen S."/>
            <person name="Brown J.Y."/>
            <person name="Brown A.J."/>
            <person name="Buckley D."/>
            <person name="Burton J."/>
            <person name="Bye J."/>
            <person name="Carder C."/>
            <person name="Chapman J.C."/>
            <person name="Clark S.Y."/>
            <person name="Clarke G."/>
            <person name="Clee C."/>
            <person name="Cobley V."/>
            <person name="Collier R.E."/>
            <person name="Corby N."/>
            <person name="Coville G.J."/>
            <person name="Davies J."/>
            <person name="Deadman R."/>
            <person name="Dunn M."/>
            <person name="Earthrowl M."/>
            <person name="Ellington A.G."/>
            <person name="Errington H."/>
            <person name="Frankish A."/>
            <person name="Frankland J."/>
            <person name="French L."/>
            <person name="Garner P."/>
            <person name="Garnett J."/>
            <person name="Gay L."/>
            <person name="Ghori M.R.J."/>
            <person name="Gibson R."/>
            <person name="Gilby L.M."/>
            <person name="Gillett W."/>
            <person name="Glithero R.J."/>
            <person name="Grafham D.V."/>
            <person name="Griffiths C."/>
            <person name="Griffiths-Jones S."/>
            <person name="Grocock R."/>
            <person name="Hammond S."/>
            <person name="Harrison E.S.I."/>
            <person name="Hart E."/>
            <person name="Haugen E."/>
            <person name="Heath P.D."/>
            <person name="Holmes S."/>
            <person name="Holt K."/>
            <person name="Howden P.J."/>
            <person name="Hunt A.R."/>
            <person name="Hunt S.E."/>
            <person name="Hunter G."/>
            <person name="Isherwood J."/>
            <person name="James R."/>
            <person name="Johnson C."/>
            <person name="Johnson D."/>
            <person name="Joy A."/>
            <person name="Kay M."/>
            <person name="Kershaw J.K."/>
            <person name="Kibukawa M."/>
            <person name="Kimberley A.M."/>
            <person name="King A."/>
            <person name="Knights A.J."/>
            <person name="Lad H."/>
            <person name="Laird G."/>
            <person name="Lawlor S."/>
            <person name="Leongamornlert D.A."/>
            <person name="Lloyd D.M."/>
            <person name="Loveland J."/>
            <person name="Lovell J."/>
            <person name="Lush M.J."/>
            <person name="Lyne R."/>
            <person name="Martin S."/>
            <person name="Mashreghi-Mohammadi M."/>
            <person name="Matthews L."/>
            <person name="Matthews N.S.W."/>
            <person name="McLaren S."/>
            <person name="Milne S."/>
            <person name="Mistry S."/>
            <person name="Moore M.J.F."/>
            <person name="Nickerson T."/>
            <person name="O'Dell C.N."/>
            <person name="Oliver K."/>
            <person name="Palmeiri A."/>
            <person name="Palmer S.A."/>
            <person name="Parker A."/>
            <person name="Patel D."/>
            <person name="Pearce A.V."/>
            <person name="Peck A.I."/>
            <person name="Pelan S."/>
            <person name="Phelps K."/>
            <person name="Phillimore B.J."/>
            <person name="Plumb R."/>
            <person name="Rajan J."/>
            <person name="Raymond C."/>
            <person name="Rouse G."/>
            <person name="Saenphimmachak C."/>
            <person name="Sehra H.K."/>
            <person name="Sheridan E."/>
            <person name="Shownkeen R."/>
            <person name="Sims S."/>
            <person name="Skuce C.D."/>
            <person name="Smith M."/>
            <person name="Steward C."/>
            <person name="Subramanian S."/>
            <person name="Sycamore N."/>
            <person name="Tracey A."/>
            <person name="Tromans A."/>
            <person name="Van Helmond Z."/>
            <person name="Wall M."/>
            <person name="Wallis J.M."/>
            <person name="White S."/>
            <person name="Whitehead S.L."/>
            <person name="Wilkinson J.E."/>
            <person name="Willey D.L."/>
            <person name="Williams H."/>
            <person name="Wilming L."/>
            <person name="Wray P.W."/>
            <person name="Wu Z."/>
            <person name="Coulson A."/>
            <person name="Vaudin M."/>
            <person name="Sulston J.E."/>
            <person name="Durbin R.M."/>
            <person name="Hubbard T."/>
            <person name="Wooster R."/>
            <person name="Dunham I."/>
            <person name="Carter N.P."/>
            <person name="McVean G."/>
            <person name="Ross M.T."/>
            <person name="Harrow J."/>
            <person name="Olson M.V."/>
            <person name="Beck S."/>
            <person name="Rogers J."/>
            <person name="Bentley D.R."/>
        </authorList>
    </citation>
    <scope>NUCLEOTIDE SEQUENCE [LARGE SCALE GENOMIC DNA]</scope>
</reference>
<reference key="2">
    <citation type="journal article" date="2004" name="Genome Res.">
        <title>The status, quality, and expansion of the NIH full-length cDNA project: the Mammalian Gene Collection (MGC).</title>
        <authorList>
            <consortium name="The MGC Project Team"/>
        </authorList>
    </citation>
    <scope>NUCLEOTIDE SEQUENCE [LARGE SCALE MRNA]</scope>
    <scope>VARIANT MET-178</scope>
    <source>
        <tissue>Lymph</tissue>
    </source>
</reference>
<name>CA050_HUMAN</name>
<sequence>MEDAAAPGRTEGVLERQGAPPAAGQGGALVELTPTPGGLALVSPYHTHRAGDPLDLVALAEQVQKADEFIRANATNKLTVIAEQIQHLQEQARKVLEDAHRDANLHHVACNIVKKPGNIYYLYKRESGQQYFSIISPKEWGTSCPHDFLGAYKLQHDLSWTPYEDIEKQDAKISMMDTLLSQSVALPPCTEPNFQGLTH</sequence>
<evidence type="ECO:0000255" key="1"/>
<evidence type="ECO:0000256" key="2">
    <source>
        <dbReference type="SAM" id="MobiDB-lite"/>
    </source>
</evidence>
<evidence type="ECO:0000269" key="3">
    <source>
    </source>
</evidence>
<dbReference type="EMBL" id="AC098484">
    <property type="status" value="NOT_ANNOTATED_CDS"/>
    <property type="molecule type" value="Genomic_DNA"/>
</dbReference>
<dbReference type="EMBL" id="BC001508">
    <property type="protein sequence ID" value="AAH01508.1"/>
    <property type="molecule type" value="mRNA"/>
</dbReference>
<dbReference type="EMBL" id="BC001711">
    <property type="protein sequence ID" value="AAH01711.1"/>
    <property type="molecule type" value="mRNA"/>
</dbReference>
<dbReference type="CCDS" id="CCDS473.1"/>
<dbReference type="RefSeq" id="NP_077002.2">
    <property type="nucleotide sequence ID" value="NM_024097.4"/>
</dbReference>
<dbReference type="SMR" id="Q9BV19"/>
<dbReference type="BioGRID" id="122528">
    <property type="interactions" value="24"/>
</dbReference>
<dbReference type="FunCoup" id="Q9BV19">
    <property type="interactions" value="100"/>
</dbReference>
<dbReference type="IntAct" id="Q9BV19">
    <property type="interactions" value="19"/>
</dbReference>
<dbReference type="MINT" id="Q9BV19"/>
<dbReference type="STRING" id="9606.ENSP00000361603"/>
<dbReference type="GlyGen" id="Q9BV19">
    <property type="glycosylation" value="3 sites, 1 O-linked glycan (2 sites)"/>
</dbReference>
<dbReference type="iPTMnet" id="Q9BV19"/>
<dbReference type="PhosphoSitePlus" id="Q9BV19"/>
<dbReference type="BioMuta" id="C1orf50"/>
<dbReference type="DMDM" id="223590163"/>
<dbReference type="jPOST" id="Q9BV19"/>
<dbReference type="MassIVE" id="Q9BV19"/>
<dbReference type="PaxDb" id="9606-ENSP00000361603"/>
<dbReference type="PeptideAtlas" id="Q9BV19"/>
<dbReference type="ProteomicsDB" id="79151"/>
<dbReference type="Pumba" id="Q9BV19"/>
<dbReference type="Antibodypedia" id="32249">
    <property type="antibodies" value="186 antibodies from 19 providers"/>
</dbReference>
<dbReference type="DNASU" id="79078"/>
<dbReference type="Ensembl" id="ENST00000372525.7">
    <property type="protein sequence ID" value="ENSP00000361603.4"/>
    <property type="gene ID" value="ENSG00000164008.17"/>
</dbReference>
<dbReference type="GeneID" id="79078"/>
<dbReference type="KEGG" id="hsa:79078"/>
<dbReference type="MANE-Select" id="ENST00000372525.7">
    <property type="protein sequence ID" value="ENSP00000361603.4"/>
    <property type="RefSeq nucleotide sequence ID" value="NM_024097.4"/>
    <property type="RefSeq protein sequence ID" value="NP_077002.2"/>
</dbReference>
<dbReference type="UCSC" id="uc001cia.5">
    <property type="organism name" value="human"/>
</dbReference>
<dbReference type="AGR" id="HGNC:28795"/>
<dbReference type="CTD" id="79078"/>
<dbReference type="GeneCards" id="C1orf50"/>
<dbReference type="HGNC" id="HGNC:28795">
    <property type="gene designation" value="C1orf50"/>
</dbReference>
<dbReference type="HPA" id="ENSG00000164008">
    <property type="expression patterns" value="Low tissue specificity"/>
</dbReference>
<dbReference type="neXtProt" id="NX_Q9BV19"/>
<dbReference type="PharmGKB" id="PA134861089"/>
<dbReference type="VEuPathDB" id="HostDB:ENSG00000164008"/>
<dbReference type="eggNOG" id="ENOG502QWKE">
    <property type="taxonomic scope" value="Eukaryota"/>
</dbReference>
<dbReference type="GeneTree" id="ENSGT00390000003084"/>
<dbReference type="HOGENOM" id="CLU_102988_0_1_1"/>
<dbReference type="InParanoid" id="Q9BV19"/>
<dbReference type="OMA" id="KEWGANC"/>
<dbReference type="OrthoDB" id="9995764at2759"/>
<dbReference type="PAN-GO" id="Q9BV19">
    <property type="GO annotations" value="0 GO annotations based on evolutionary models"/>
</dbReference>
<dbReference type="PhylomeDB" id="Q9BV19"/>
<dbReference type="TreeFam" id="TF105992"/>
<dbReference type="PathwayCommons" id="Q9BV19"/>
<dbReference type="SignaLink" id="Q9BV19"/>
<dbReference type="BioGRID-ORCS" id="79078">
    <property type="hits" value="12 hits in 1136 CRISPR screens"/>
</dbReference>
<dbReference type="ChiTaRS" id="C1orf50">
    <property type="organism name" value="human"/>
</dbReference>
<dbReference type="GenomeRNAi" id="79078"/>
<dbReference type="Pharos" id="Q9BV19">
    <property type="development level" value="Tdark"/>
</dbReference>
<dbReference type="PRO" id="PR:Q9BV19"/>
<dbReference type="Proteomes" id="UP000005640">
    <property type="component" value="Chromosome 1"/>
</dbReference>
<dbReference type="RNAct" id="Q9BV19">
    <property type="molecule type" value="protein"/>
</dbReference>
<dbReference type="Bgee" id="ENSG00000164008">
    <property type="expression patterns" value="Expressed in primordial germ cell in gonad and 104 other cell types or tissues"/>
</dbReference>
<dbReference type="GO" id="GO:0042802">
    <property type="term" value="F:identical protein binding"/>
    <property type="evidence" value="ECO:0000353"/>
    <property type="project" value="IntAct"/>
</dbReference>
<dbReference type="InterPro" id="IPR019534">
    <property type="entry name" value="DUF2452"/>
</dbReference>
<dbReference type="PANTHER" id="PTHR14553:SF1">
    <property type="entry name" value="SIMILAR TO CHROMOSOME 1 OPEN READING FRAME 50"/>
    <property type="match status" value="1"/>
</dbReference>
<dbReference type="PANTHER" id="PTHR14553">
    <property type="entry name" value="UNCHARACTERIZED PROTEIN C1ORF50"/>
    <property type="match status" value="1"/>
</dbReference>
<dbReference type="Pfam" id="PF10504">
    <property type="entry name" value="DUF2452"/>
    <property type="match status" value="1"/>
</dbReference>
<comment type="interaction">
    <interactant intactId="EBI-2874661">
        <id>Q9BV19</id>
    </interactant>
    <interactant intactId="EBI-2838710">
        <id>Q8NFM4</id>
        <label>ADCY4</label>
    </interactant>
    <organismsDiffer>false</organismsDiffer>
    <experiments>3</experiments>
</comment>
<comment type="interaction">
    <interactant intactId="EBI-2874661">
        <id>Q9BV19</id>
    </interactant>
    <interactant intactId="EBI-1053240">
        <id>P23526</id>
        <label>AHCY</label>
    </interactant>
    <organismsDiffer>false</organismsDiffer>
    <experiments>13</experiments>
</comment>
<comment type="interaction">
    <interactant intactId="EBI-2874661">
        <id>Q9BV19</id>
    </interactant>
    <interactant intactId="EBI-743771">
        <id>Q92624</id>
        <label>APPBP2</label>
    </interactant>
    <organismsDiffer>false</organismsDiffer>
    <experiments>6</experiments>
</comment>
<comment type="interaction">
    <interactant intactId="EBI-2874661">
        <id>Q9BV19</id>
    </interactant>
    <interactant intactId="EBI-2874661">
        <id>Q9BV19</id>
        <label>C1orf50</label>
    </interactant>
    <organismsDiffer>false</organismsDiffer>
    <experiments>4</experiments>
</comment>
<comment type="interaction">
    <interactant intactId="EBI-2874661">
        <id>Q9BV19</id>
    </interactant>
    <interactant intactId="EBI-748171">
        <id>O43186</id>
        <label>CRX</label>
    </interactant>
    <organismsDiffer>false</organismsDiffer>
    <experiments>3</experiments>
</comment>
<comment type="interaction">
    <interactant intactId="EBI-2874661">
        <id>Q9BV19</id>
    </interactant>
    <interactant intactId="EBI-2339219">
        <id>Q08426</id>
        <label>EHHADH</label>
    </interactant>
    <organismsDiffer>false</organismsDiffer>
    <experiments>3</experiments>
</comment>
<comment type="interaction">
    <interactant intactId="EBI-2874661">
        <id>Q9BV19</id>
    </interactant>
    <interactant intactId="EBI-491065">
        <id>Q14232</id>
        <label>EIF2B1</label>
    </interactant>
    <organismsDiffer>false</organismsDiffer>
    <experiments>3</experiments>
</comment>
<comment type="interaction">
    <interactant intactId="EBI-2874661">
        <id>Q9BV19</id>
    </interactant>
    <interactant intactId="EBI-6255981">
        <id>Q7L775</id>
        <label>EPM2AIP1</label>
    </interactant>
    <organismsDiffer>false</organismsDiffer>
    <experiments>3</experiments>
</comment>
<comment type="interaction">
    <interactant intactId="EBI-2874661">
        <id>Q9BV19</id>
    </interactant>
    <interactant intactId="EBI-6509505">
        <id>Q0VD86</id>
        <label>INCA1</label>
    </interactant>
    <organismsDiffer>false</organismsDiffer>
    <experiments>3</experiments>
</comment>
<comment type="interaction">
    <interactant intactId="EBI-2874661">
        <id>Q9BV19</id>
    </interactant>
    <interactant intactId="EBI-18273118">
        <id>Q9P2M1</id>
        <label>LRP2BP</label>
    </interactant>
    <organismsDiffer>false</organismsDiffer>
    <experiments>3</experiments>
</comment>
<comment type="interaction">
    <interactant intactId="EBI-2874661">
        <id>Q9BV19</id>
    </interactant>
    <interactant intactId="EBI-2864512">
        <id>P50221</id>
        <label>MEOX1</label>
    </interactant>
    <organismsDiffer>false</organismsDiffer>
    <experiments>3</experiments>
</comment>
<comment type="interaction">
    <interactant intactId="EBI-2874661">
        <id>Q9BV19</id>
    </interactant>
    <interactant intactId="EBI-16439278">
        <id>Q6FHY5</id>
        <label>MEOX2</label>
    </interactant>
    <organismsDiffer>false</organismsDiffer>
    <experiments>3</experiments>
</comment>
<comment type="interaction">
    <interactant intactId="EBI-2874661">
        <id>Q9BV19</id>
    </interactant>
    <interactant intactId="EBI-741158">
        <id>Q96HA8</id>
        <label>NTAQ1</label>
    </interactant>
    <organismsDiffer>false</organismsDiffer>
    <experiments>6</experiments>
</comment>
<comment type="interaction">
    <interactant intactId="EBI-2874661">
        <id>Q9BV19</id>
    </interactant>
    <interactant intactId="EBI-10829018">
        <id>Q04864-2</id>
        <label>REL</label>
    </interactant>
    <organismsDiffer>false</organismsDiffer>
    <experiments>3</experiments>
</comment>
<comment type="interaction">
    <interactant intactId="EBI-2874661">
        <id>Q9BV19</id>
    </interactant>
    <interactant intactId="EBI-13636688">
        <id>P15884-3</id>
        <label>TCF4</label>
    </interactant>
    <organismsDiffer>false</organismsDiffer>
    <experiments>3</experiments>
</comment>
<organism>
    <name type="scientific">Homo sapiens</name>
    <name type="common">Human</name>
    <dbReference type="NCBI Taxonomy" id="9606"/>
    <lineage>
        <taxon>Eukaryota</taxon>
        <taxon>Metazoa</taxon>
        <taxon>Chordata</taxon>
        <taxon>Craniata</taxon>
        <taxon>Vertebrata</taxon>
        <taxon>Euteleostomi</taxon>
        <taxon>Mammalia</taxon>
        <taxon>Eutheria</taxon>
        <taxon>Euarchontoglires</taxon>
        <taxon>Primates</taxon>
        <taxon>Haplorrhini</taxon>
        <taxon>Catarrhini</taxon>
        <taxon>Hominidae</taxon>
        <taxon>Homo</taxon>
    </lineage>
</organism>
<protein>
    <recommendedName>
        <fullName>Uncharacterized protein C1orf50</fullName>
    </recommendedName>
</protein>
<proteinExistence type="evidence at protein level"/>